<accession>Q01383</accession>
<reference key="1">
    <citation type="journal article" date="1992" name="Biol. Bull.">
        <title>The divergence of species-specific abalone sperm lysins is promoted by positive Darwinian selection.</title>
        <authorList>
            <person name="Lee Y.H."/>
            <person name="Vacquier V.D."/>
        </authorList>
    </citation>
    <scope>NUCLEOTIDE SEQUENCE [MRNA]</scope>
</reference>
<keyword id="KW-0278">Fertilization</keyword>
<keyword id="KW-0732">Signal</keyword>
<name>ELYS_HALSO</name>
<proteinExistence type="evidence at transcript level"/>
<dbReference type="EMBL" id="M59968">
    <property type="protein sequence ID" value="AAA29199.1"/>
    <property type="molecule type" value="mRNA"/>
</dbReference>
<dbReference type="SMR" id="Q01383"/>
<dbReference type="GO" id="GO:0043160">
    <property type="term" value="C:acrosomal lumen"/>
    <property type="evidence" value="ECO:0000250"/>
    <property type="project" value="UniProtKB"/>
</dbReference>
<dbReference type="GO" id="GO:0007338">
    <property type="term" value="P:single fertilization"/>
    <property type="evidence" value="ECO:0000250"/>
    <property type="project" value="UniProtKB"/>
</dbReference>
<dbReference type="CDD" id="cd00243">
    <property type="entry name" value="Lysin-Sp18"/>
    <property type="match status" value="1"/>
</dbReference>
<dbReference type="FunFam" id="1.20.150.10:FF:000001">
    <property type="entry name" value="Egg-lysin"/>
    <property type="match status" value="1"/>
</dbReference>
<dbReference type="Gene3D" id="1.20.150.10">
    <property type="entry name" value="Fertilization protein"/>
    <property type="match status" value="1"/>
</dbReference>
<dbReference type="InterPro" id="IPR001379">
    <property type="entry name" value="Egg_lysin"/>
</dbReference>
<dbReference type="InterPro" id="IPR035916">
    <property type="entry name" value="Egg_lysin_sf"/>
</dbReference>
<dbReference type="Pfam" id="PF01303">
    <property type="entry name" value="Egg_lysin"/>
    <property type="match status" value="1"/>
</dbReference>
<dbReference type="PRINTS" id="PR01882">
    <property type="entry name" value="LYSIN"/>
</dbReference>
<dbReference type="SUPFAM" id="SSF47082">
    <property type="entry name" value="Fertilization protein"/>
    <property type="match status" value="1"/>
</dbReference>
<sequence>MKLLVLCIFAMMATLAMSRRWHYVPPKFLNKAFEVALKVQIIAGFDRTLVKWLRTHGGTLSHVQKKALYFVNRRYMQTHWANYMLWINKKTDALGRTPVVGDYTRLGAEIGRRIDMDYFYNFLKGRNMIPKYLPYMEEINRMRSADIPVKYMGK</sequence>
<feature type="signal peptide">
    <location>
        <begin position="1"/>
        <end position="18"/>
    </location>
</feature>
<feature type="chain" id="PRO_0000021171" description="Egg-lysin">
    <location>
        <begin position="19"/>
        <end position="154"/>
    </location>
</feature>
<organism>
    <name type="scientific">Haliotis sorenseni</name>
    <name type="common">White abalone</name>
    <dbReference type="NCBI Taxonomy" id="6458"/>
    <lineage>
        <taxon>Eukaryota</taxon>
        <taxon>Metazoa</taxon>
        <taxon>Spiralia</taxon>
        <taxon>Lophotrochozoa</taxon>
        <taxon>Mollusca</taxon>
        <taxon>Gastropoda</taxon>
        <taxon>Vetigastropoda</taxon>
        <taxon>Lepetellida</taxon>
        <taxon>Haliotoidea</taxon>
        <taxon>Haliotidae</taxon>
        <taxon>Haliotis</taxon>
    </lineage>
</organism>
<comment type="function">
    <text>Dissolves the egg vitelline layer nonenzymatically during fertilization. It creates a hole of about 3 mu-m in diameter through which the sperm pass.</text>
</comment>
<comment type="subunit">
    <text>Homodimer.</text>
</comment>
<comment type="tissue specificity">
    <text>Sperm.</text>
</comment>
<protein>
    <recommendedName>
        <fullName>Egg-lysin</fullName>
    </recommendedName>
    <alternativeName>
        <fullName>Sperm-lysin</fullName>
    </alternativeName>
</protein>